<accession>P27319</accession>
<organism>
    <name type="scientific">Synechocystis sp. (strain ATCC 27184 / PCC 6803 / Kazusa)</name>
    <dbReference type="NCBI Taxonomy" id="1111708"/>
    <lineage>
        <taxon>Bacteria</taxon>
        <taxon>Bacillati</taxon>
        <taxon>Cyanobacteriota</taxon>
        <taxon>Cyanophyceae</taxon>
        <taxon>Synechococcales</taxon>
        <taxon>Merismopediaceae</taxon>
        <taxon>Synechocystis</taxon>
    </lineage>
</organism>
<name>FLAV_SYNY3</name>
<proteinExistence type="evidence at protein level"/>
<feature type="chain" id="PRO_0000171645" description="Flavodoxin">
    <location>
        <begin position="1"/>
        <end position="170"/>
    </location>
</feature>
<feature type="domain" description="Flavodoxin-like" evidence="1">
    <location>
        <begin position="4"/>
        <end position="165"/>
    </location>
</feature>
<feature type="sequence conflict" description="In Ref. 3; AA sequence." evidence="2" ref="3">
    <location>
        <position position="2"/>
    </location>
</feature>
<feature type="sequence conflict" description="In Ref. 3; AA sequence." evidence="2" ref="3">
    <original>A</original>
    <variation>AA</variation>
    <location>
        <position position="40"/>
    </location>
</feature>
<keyword id="KW-0903">Direct protein sequencing</keyword>
<keyword id="KW-0249">Electron transport</keyword>
<keyword id="KW-0285">Flavoprotein</keyword>
<keyword id="KW-0288">FMN</keyword>
<keyword id="KW-1185">Reference proteome</keyword>
<keyword id="KW-0813">Transport</keyword>
<comment type="function">
    <text>Low-potential electron donor to a number of redox enzymes.</text>
</comment>
<comment type="cofactor">
    <cofactor>
        <name>FMN</name>
        <dbReference type="ChEBI" id="CHEBI:58210"/>
    </cofactor>
</comment>
<comment type="biophysicochemical properties">
    <redoxPotential>
        <text>E(0) are -433 mV and -238 mV.</text>
    </redoxPotential>
</comment>
<comment type="similarity">
    <text evidence="2">Belongs to the flavodoxin family.</text>
</comment>
<evidence type="ECO:0000255" key="1">
    <source>
        <dbReference type="PROSITE-ProRule" id="PRU00088"/>
    </source>
</evidence>
<evidence type="ECO:0000305" key="2"/>
<reference key="1">
    <citation type="journal article" date="1994" name="Gene">
        <title>Sequence of the flavodoxin-encoding gene from the cyanobacterium Synechocystis PCC6803.</title>
        <authorList>
            <person name="Poncelet M.G.M."/>
            <person name="Cassier-Chauvat C.J.S."/>
            <person name="Chauvat F.R.L."/>
        </authorList>
    </citation>
    <scope>NUCLEOTIDE SEQUENCE [GENOMIC DNA]</scope>
</reference>
<reference key="2">
    <citation type="journal article" date="1996" name="DNA Res.">
        <title>Sequence analysis of the genome of the unicellular cyanobacterium Synechocystis sp. strain PCC6803. II. Sequence determination of the entire genome and assignment of potential protein-coding regions.</title>
        <authorList>
            <person name="Kaneko T."/>
            <person name="Sato S."/>
            <person name="Kotani H."/>
            <person name="Tanaka A."/>
            <person name="Asamizu E."/>
            <person name="Nakamura Y."/>
            <person name="Miyajima N."/>
            <person name="Hirosawa M."/>
            <person name="Sugiura M."/>
            <person name="Sasamoto S."/>
            <person name="Kimura T."/>
            <person name="Hosouchi T."/>
            <person name="Matsuno A."/>
            <person name="Muraki A."/>
            <person name="Nakazaki N."/>
            <person name="Naruo K."/>
            <person name="Okumura S."/>
            <person name="Shimpo S."/>
            <person name="Takeuchi C."/>
            <person name="Wada T."/>
            <person name="Watanabe A."/>
            <person name="Yamada M."/>
            <person name="Yasuda M."/>
            <person name="Tabata S."/>
        </authorList>
    </citation>
    <scope>NUCLEOTIDE SEQUENCE [LARGE SCALE GENOMIC DNA]</scope>
    <source>
        <strain>ATCC 27184 / PCC 6803 / Kazusa</strain>
    </source>
</reference>
<reference key="3">
    <citation type="journal article" date="1992" name="Biochim. Biophys. Acta">
        <title>Ferredoxin and flavodoxin from the cyanobacterium Synechocystis sp PCC 6803.</title>
        <authorList>
            <person name="Bottin H."/>
            <person name="Lagoutte B."/>
        </authorList>
    </citation>
    <scope>PROTEIN SEQUENCE OF 1-42</scope>
</reference>
<sequence>MTKIGLFYGTQTGNTETIAELIQKEMGGDSVVDMMDISQADVDDFRQYSCLIIGCPTWNVGELQSDWEGFYDQLDEIDFNGKKVAYFGAGDQVGYADNFQDAMGILEEKISGLGGKTVGFWPTAGYDFDESKAVKNGKFVGLALDEDNQPELTELRVKTWVSEIKPILQS</sequence>
<gene>
    <name type="primary">isiB</name>
    <name type="ordered locus">sll0248</name>
</gene>
<protein>
    <recommendedName>
        <fullName>Flavodoxin</fullName>
    </recommendedName>
</protein>
<dbReference type="EMBL" id="Z27091">
    <property type="protein sequence ID" value="CAA81614.1"/>
    <property type="molecule type" value="Genomic_DNA"/>
</dbReference>
<dbReference type="EMBL" id="L25881">
    <property type="protein sequence ID" value="AAA27288.1"/>
    <property type="molecule type" value="Genomic_DNA"/>
</dbReference>
<dbReference type="EMBL" id="BA000022">
    <property type="protein sequence ID" value="BAA17947.1"/>
    <property type="molecule type" value="Genomic_DNA"/>
</dbReference>
<dbReference type="PIR" id="S38632">
    <property type="entry name" value="S38632"/>
</dbReference>
<dbReference type="SMR" id="P27319"/>
<dbReference type="FunCoup" id="P27319">
    <property type="interactions" value="25"/>
</dbReference>
<dbReference type="STRING" id="1148.gene:10498816"/>
<dbReference type="PaxDb" id="1148-1653030"/>
<dbReference type="EnsemblBacteria" id="BAA17947">
    <property type="protein sequence ID" value="BAA17947"/>
    <property type="gene ID" value="BAA17947"/>
</dbReference>
<dbReference type="KEGG" id="syn:sll0248"/>
<dbReference type="eggNOG" id="COG0716">
    <property type="taxonomic scope" value="Bacteria"/>
</dbReference>
<dbReference type="InParanoid" id="P27319"/>
<dbReference type="PhylomeDB" id="P27319"/>
<dbReference type="Proteomes" id="UP000001425">
    <property type="component" value="Chromosome"/>
</dbReference>
<dbReference type="GO" id="GO:0009055">
    <property type="term" value="F:electron transfer activity"/>
    <property type="evidence" value="ECO:0007669"/>
    <property type="project" value="InterPro"/>
</dbReference>
<dbReference type="GO" id="GO:0010181">
    <property type="term" value="F:FMN binding"/>
    <property type="evidence" value="ECO:0007669"/>
    <property type="project" value="InterPro"/>
</dbReference>
<dbReference type="Gene3D" id="3.40.50.360">
    <property type="match status" value="1"/>
</dbReference>
<dbReference type="InterPro" id="IPR050619">
    <property type="entry name" value="Flavodoxin"/>
</dbReference>
<dbReference type="InterPro" id="IPR008254">
    <property type="entry name" value="Flavodoxin/NO_synth"/>
</dbReference>
<dbReference type="InterPro" id="IPR001226">
    <property type="entry name" value="Flavodoxin_CS"/>
</dbReference>
<dbReference type="InterPro" id="IPR010086">
    <property type="entry name" value="Flavodoxin_lc"/>
</dbReference>
<dbReference type="InterPro" id="IPR029039">
    <property type="entry name" value="Flavoprotein-like_sf"/>
</dbReference>
<dbReference type="NCBIfam" id="TIGR01752">
    <property type="entry name" value="flav_long"/>
    <property type="match status" value="1"/>
</dbReference>
<dbReference type="NCBIfam" id="NF006736">
    <property type="entry name" value="PRK09267.1-2"/>
    <property type="match status" value="1"/>
</dbReference>
<dbReference type="NCBIfam" id="NF006738">
    <property type="entry name" value="PRK09267.1-4"/>
    <property type="match status" value="1"/>
</dbReference>
<dbReference type="NCBIfam" id="NF006739">
    <property type="entry name" value="PRK09267.1-5"/>
    <property type="match status" value="1"/>
</dbReference>
<dbReference type="PANTHER" id="PTHR42809:SF1">
    <property type="entry name" value="FLAVODOXIN 1"/>
    <property type="match status" value="1"/>
</dbReference>
<dbReference type="PANTHER" id="PTHR42809">
    <property type="entry name" value="FLAVODOXIN 2"/>
    <property type="match status" value="1"/>
</dbReference>
<dbReference type="Pfam" id="PF00258">
    <property type="entry name" value="Flavodoxin_1"/>
    <property type="match status" value="1"/>
</dbReference>
<dbReference type="PIRSF" id="PIRSF038996">
    <property type="entry name" value="FldA"/>
    <property type="match status" value="1"/>
</dbReference>
<dbReference type="SUPFAM" id="SSF52218">
    <property type="entry name" value="Flavoproteins"/>
    <property type="match status" value="1"/>
</dbReference>
<dbReference type="PROSITE" id="PS00201">
    <property type="entry name" value="FLAVODOXIN"/>
    <property type="match status" value="1"/>
</dbReference>
<dbReference type="PROSITE" id="PS50902">
    <property type="entry name" value="FLAVODOXIN_LIKE"/>
    <property type="match status" value="1"/>
</dbReference>